<reference key="1">
    <citation type="journal article" date="1992" name="EMBO J.">
        <title>The carboxy-terminal 10 amino acid residues of cytochrome b5 are necessary for its targeting to the endoplasmic reticulum.</title>
        <authorList>
            <person name="Mitoma J.-Y."/>
            <person name="Ito A."/>
        </authorList>
    </citation>
    <scope>NUCLEOTIDE SEQUENCE [MRNA]</scope>
</reference>
<reference key="2">
    <citation type="journal article" date="1997" name="Biochem. Biophys. Res. Commun.">
        <title>Identification of two homologous cytochrome b5s in rat brain.</title>
        <authorList>
            <person name="Yoo M."/>
        </authorList>
    </citation>
    <scope>NUCLEOTIDE SEQUENCE [MRNA]</scope>
    <scope>ALTERNATIVE SPLICING</scope>
    <source>
        <strain>Sprague-Dawley</strain>
        <tissue>Brain</tissue>
    </source>
</reference>
<reference key="3">
    <citation type="journal article" date="2004" name="Genome Res.">
        <title>The status, quality, and expansion of the NIH full-length cDNA project: the Mammalian Gene Collection (MGC).</title>
        <authorList>
            <consortium name="The MGC Project Team"/>
        </authorList>
    </citation>
    <scope>NUCLEOTIDE SEQUENCE [LARGE SCALE MRNA] (ISOFORM LONG)</scope>
    <source>
        <tissue>Liver</tissue>
    </source>
</reference>
<reference key="4">
    <citation type="journal article" date="1982" name="Biochim. Biophys. Acta">
        <title>Chemical structure of rat liver cytochrome b5. Isolation of peptides by high-pressure liquid chromatography.</title>
        <authorList>
            <person name="Ozols J."/>
            <person name="Heinemann F.S."/>
        </authorList>
    </citation>
    <scope>PROTEIN SEQUENCE OF 2-134</scope>
    <scope>CLEAVAGE OF INITIATOR METHIONINE</scope>
    <scope>ACETYLATION AT ALA-2</scope>
</reference>
<reference key="5">
    <citation type="journal article" date="1989" name="Biochim. Biophys. Acta">
        <title>Structure of cytochrome b5 and its topology in the microsomal membrane.</title>
        <authorList>
            <person name="Ozols J."/>
        </authorList>
    </citation>
    <scope>PROTEIN SEQUENCE OF 2-11</scope>
</reference>
<reference key="6">
    <citation type="journal article" date="1983" name="Eur. J. Biochem.">
        <title>Two homologous cytochromes b5 in a single cell.</title>
        <authorList>
            <person name="Lederer F."/>
            <person name="Ghrir R."/>
            <person name="Guiard B."/>
            <person name="Cortial S."/>
            <person name="Ito A."/>
        </authorList>
    </citation>
    <scope>PROTEIN SEQUENCE OF 7-89</scope>
</reference>
<reference key="7">
    <citation type="journal article" date="1996" name="Biochemistry">
        <title>Design challenges for hemoproteins: the solution structure of apocytochrome b5.</title>
        <authorList>
            <person name="Falzone C.J."/>
            <person name="Mayer M.R."/>
            <person name="Whiteman E.L."/>
            <person name="Moore C.D."/>
            <person name="Lecomte J.T.J."/>
        </authorList>
    </citation>
    <scope>STRUCTURE BY NMR OF 1-99</scope>
</reference>
<reference key="8">
    <citation type="journal article" date="1997" name="Eur. J. Biochem.">
        <title>Solution structure of reduced microsomal rat cytochrome b5.</title>
        <authorList>
            <person name="Banci L."/>
            <person name="Bertini I."/>
            <person name="Ferroni F."/>
            <person name="Rosato A."/>
        </authorList>
    </citation>
    <scope>STRUCTURE BY NMR OF 6-99</scope>
</reference>
<reference key="9">
    <citation type="journal article" date="1998" name="Biochemistry">
        <title>The solution structure of oxidized rat microsomal cytochrome b5.</title>
        <authorList>
            <person name="Arnesano F."/>
            <person name="Banci L."/>
            <person name="Bertini I."/>
            <person name="Felli I.C."/>
        </authorList>
    </citation>
    <scope>STRUCTURE BY NMR OF 6-99</scope>
</reference>
<reference key="10">
    <citation type="journal article" date="1998" name="Biochemistry">
        <title>The origin of differences in the physical properties of the equilibrium forms of cytochrome b5 revealed through high-resolution NMR structures and backbone dynamic analyses.</title>
        <authorList>
            <person name="Dangi B."/>
            <person name="Sarma S."/>
            <person name="Yan C."/>
            <person name="Banville D.L."/>
            <person name="Guiles R.D."/>
        </authorList>
    </citation>
    <scope>STRUCTURE BY NMR OF 6-99</scope>
</reference>
<reference key="11">
    <citation type="journal article" date="2001" name="Biochemistry">
        <title>Structural and dynamic perturbations induced by heme binding in cytochrome b5.</title>
        <authorList>
            <person name="Falzone C.J."/>
            <person name="Wang Y."/>
            <person name="Vu B.C."/>
            <person name="Scott N.L."/>
            <person name="Bhattacharya S."/>
            <person name="Lecomte J.T.J."/>
        </authorList>
    </citation>
    <scope>STRUCTURE BY NMR OF 1-99</scope>
</reference>
<comment type="function">
    <text>Cytochrome b5 is a membrane-bound hemoprotein functioning as an electron carrier for several membrane-bound oxygenases. It is also involved in several steps of the sterol biosynthesis pathway, particularly in the C-6 double bond introduction during the C-6 desaturation.</text>
</comment>
<comment type="subcellular location">
    <subcellularLocation>
        <location>Endoplasmic reticulum membrane</location>
        <topology>Single-pass membrane protein</topology>
        <orientation>Cytoplasmic side</orientation>
    </subcellularLocation>
    <subcellularLocation>
        <location>Microsome membrane</location>
        <topology>Single-pass membrane protein</topology>
        <orientation>Cytoplasmic side</orientation>
    </subcellularLocation>
</comment>
<comment type="alternative products">
    <event type="alternative splicing"/>
    <isoform>
        <id>P00173-1</id>
        <name>Long</name>
        <sequence type="displayed"/>
    </isoform>
    <isoform>
        <id>P00173-2</id>
        <name>Short</name>
        <sequence type="described" ref="VSP_001246 VSP_001247"/>
    </isoform>
</comment>
<comment type="similarity">
    <text evidence="6">Belongs to the cytochrome b5 family.</text>
</comment>
<protein>
    <recommendedName>
        <fullName>Cytochrome b5</fullName>
    </recommendedName>
</protein>
<sequence>MAEQSDKDVKYYTLEEIQKHKDSKSTWVILHHKVYDLTKFLEEHPGGEEVLREQAGGDATENFEDVGHSTDARELSKTYIIGELHPDDRSKIAKPSETLITTVESNSSWWTNWVIPAISALVVALMYRLYMAED</sequence>
<dbReference type="EMBL" id="D13205">
    <property type="protein sequence ID" value="BAA02492.1"/>
    <property type="molecule type" value="mRNA"/>
</dbReference>
<dbReference type="EMBL" id="AF007107">
    <property type="protein sequence ID" value="AAB67609.1"/>
    <property type="molecule type" value="mRNA"/>
</dbReference>
<dbReference type="EMBL" id="AF007108">
    <property type="protein sequence ID" value="AAB67610.1"/>
    <property type="molecule type" value="mRNA"/>
</dbReference>
<dbReference type="EMBL" id="BC086945">
    <property type="protein sequence ID" value="AAH86945.1"/>
    <property type="molecule type" value="mRNA"/>
</dbReference>
<dbReference type="PIR" id="JC5596">
    <property type="entry name" value="JC5596"/>
</dbReference>
<dbReference type="PIR" id="S28404">
    <property type="entry name" value="CBRT5"/>
</dbReference>
<dbReference type="RefSeq" id="NP_071581.1">
    <molecule id="P00173-1"/>
    <property type="nucleotide sequence ID" value="NM_022245.2"/>
</dbReference>
<dbReference type="PDB" id="1AQA">
    <property type="method" value="NMR"/>
    <property type="chains" value="A=6-99"/>
</dbReference>
<dbReference type="PDB" id="1AW3">
    <property type="method" value="NMR"/>
    <property type="chains" value="A=6-99"/>
</dbReference>
<dbReference type="PDB" id="1AXX">
    <property type="method" value="NMR"/>
    <property type="chains" value="A=6-99"/>
</dbReference>
<dbReference type="PDB" id="1B5A">
    <property type="method" value="NMR"/>
    <property type="chains" value="A=6-99"/>
</dbReference>
<dbReference type="PDB" id="1B5B">
    <property type="method" value="NMR"/>
    <property type="chains" value="A=6-99"/>
</dbReference>
<dbReference type="PDB" id="1BFX">
    <property type="method" value="NMR"/>
    <property type="chains" value="A=1-99"/>
</dbReference>
<dbReference type="PDB" id="1BLV">
    <property type="method" value="NMR"/>
    <property type="chains" value="A=6-99"/>
</dbReference>
<dbReference type="PDB" id="1I87">
    <property type="method" value="NMR"/>
    <property type="chains" value="A=2-99"/>
</dbReference>
<dbReference type="PDB" id="1I8C">
    <property type="method" value="NMR"/>
    <property type="chains" value="A=2-99"/>
</dbReference>
<dbReference type="PDB" id="1IB7">
    <property type="method" value="NMR"/>
    <property type="chains" value="A=6-99"/>
</dbReference>
<dbReference type="PDB" id="1IET">
    <property type="method" value="NMR"/>
    <property type="chains" value="A=2-99"/>
</dbReference>
<dbReference type="PDB" id="1IEU">
    <property type="method" value="NMR"/>
    <property type="chains" value="A=2-99"/>
</dbReference>
<dbReference type="PDB" id="1JEX">
    <property type="method" value="NMR"/>
    <property type="chains" value="A=6-99"/>
</dbReference>
<dbReference type="PDB" id="1MNY">
    <property type="method" value="NMR"/>
    <property type="chains" value="A=6-99"/>
</dbReference>
<dbReference type="PDB" id="2AXX">
    <property type="method" value="NMR"/>
    <property type="chains" value="A=6-99"/>
</dbReference>
<dbReference type="PDB" id="5XE4">
    <property type="method" value="NMR"/>
    <property type="chains" value="A=2-99"/>
</dbReference>
<dbReference type="PDB" id="5XEE">
    <property type="method" value="NMR"/>
    <property type="chains" value="A=2-99"/>
</dbReference>
<dbReference type="PDBsum" id="1AQA"/>
<dbReference type="PDBsum" id="1AW3"/>
<dbReference type="PDBsum" id="1AXX"/>
<dbReference type="PDBsum" id="1B5A"/>
<dbReference type="PDBsum" id="1B5B"/>
<dbReference type="PDBsum" id="1BFX"/>
<dbReference type="PDBsum" id="1BLV"/>
<dbReference type="PDBsum" id="1I87"/>
<dbReference type="PDBsum" id="1I8C"/>
<dbReference type="PDBsum" id="1IB7"/>
<dbReference type="PDBsum" id="1IET"/>
<dbReference type="PDBsum" id="1IEU"/>
<dbReference type="PDBsum" id="1JEX"/>
<dbReference type="PDBsum" id="1MNY"/>
<dbReference type="PDBsum" id="2AXX"/>
<dbReference type="PDBsum" id="5XE4"/>
<dbReference type="PDBsum" id="5XEE"/>
<dbReference type="BMRB" id="P00173"/>
<dbReference type="SMR" id="P00173"/>
<dbReference type="FunCoup" id="P00173">
    <property type="interactions" value="2580"/>
</dbReference>
<dbReference type="IntAct" id="P00173">
    <property type="interactions" value="1"/>
</dbReference>
<dbReference type="STRING" id="10116.ENSRNOP00000020446"/>
<dbReference type="iPTMnet" id="P00173"/>
<dbReference type="PhosphoSitePlus" id="P00173"/>
<dbReference type="jPOST" id="P00173"/>
<dbReference type="PaxDb" id="10116-ENSRNOP00000020446"/>
<dbReference type="GeneID" id="64001"/>
<dbReference type="KEGG" id="rno:64001"/>
<dbReference type="AGR" id="RGD:620558"/>
<dbReference type="CTD" id="1528"/>
<dbReference type="RGD" id="620558">
    <property type="gene designation" value="Cyb5a"/>
</dbReference>
<dbReference type="VEuPathDB" id="HostDB:ENSRNOG00000070068"/>
<dbReference type="eggNOG" id="KOG0537">
    <property type="taxonomic scope" value="Eukaryota"/>
</dbReference>
<dbReference type="HOGENOM" id="CLU_102602_3_3_1"/>
<dbReference type="InParanoid" id="P00173"/>
<dbReference type="OrthoDB" id="8496at9989"/>
<dbReference type="PhylomeDB" id="P00173"/>
<dbReference type="TreeFam" id="TF314537"/>
<dbReference type="Reactome" id="R-RNO-196836">
    <property type="pathway name" value="Vitamin C (ascorbate) metabolism"/>
</dbReference>
<dbReference type="Reactome" id="R-RNO-9609523">
    <property type="pathway name" value="Insertion of tail-anchored proteins into the endoplasmic reticulum membrane"/>
</dbReference>
<dbReference type="EvolutionaryTrace" id="P00173"/>
<dbReference type="PRO" id="PR:P00173"/>
<dbReference type="Proteomes" id="UP000002494">
    <property type="component" value="Chromosome 18"/>
</dbReference>
<dbReference type="Bgee" id="ENSRNOG00000015205">
    <property type="expression patterns" value="Expressed in liver and 20 other cell types or tissues"/>
</dbReference>
<dbReference type="GO" id="GO:0005783">
    <property type="term" value="C:endoplasmic reticulum"/>
    <property type="evidence" value="ECO:0000314"/>
    <property type="project" value="HGNC-UCL"/>
</dbReference>
<dbReference type="GO" id="GO:0005789">
    <property type="term" value="C:endoplasmic reticulum membrane"/>
    <property type="evidence" value="ECO:0000314"/>
    <property type="project" value="RGD"/>
</dbReference>
<dbReference type="GO" id="GO:0043231">
    <property type="term" value="C:intracellular membrane-bounded organelle"/>
    <property type="evidence" value="ECO:0000318"/>
    <property type="project" value="GO_Central"/>
</dbReference>
<dbReference type="GO" id="GO:0016020">
    <property type="term" value="C:membrane"/>
    <property type="evidence" value="ECO:0000266"/>
    <property type="project" value="RGD"/>
</dbReference>
<dbReference type="GO" id="GO:0009055">
    <property type="term" value="F:electron transfer activity"/>
    <property type="evidence" value="ECO:0000304"/>
    <property type="project" value="RGD"/>
</dbReference>
<dbReference type="GO" id="GO:0019899">
    <property type="term" value="F:enzyme binding"/>
    <property type="evidence" value="ECO:0000266"/>
    <property type="project" value="RGD"/>
</dbReference>
<dbReference type="GO" id="GO:0020037">
    <property type="term" value="F:heme binding"/>
    <property type="evidence" value="ECO:0000318"/>
    <property type="project" value="GO_Central"/>
</dbReference>
<dbReference type="GO" id="GO:0046872">
    <property type="term" value="F:metal ion binding"/>
    <property type="evidence" value="ECO:0007669"/>
    <property type="project" value="UniProtKB-KW"/>
</dbReference>
<dbReference type="GO" id="GO:0046686">
    <property type="term" value="P:response to cadmium ion"/>
    <property type="evidence" value="ECO:0000270"/>
    <property type="project" value="RGD"/>
</dbReference>
<dbReference type="FunFam" id="3.10.120.10:FF:000002">
    <property type="entry name" value="Cytochrome b5 type B"/>
    <property type="match status" value="1"/>
</dbReference>
<dbReference type="Gene3D" id="3.10.120.10">
    <property type="entry name" value="Cytochrome b5-like heme/steroid binding domain"/>
    <property type="match status" value="1"/>
</dbReference>
<dbReference type="InterPro" id="IPR001199">
    <property type="entry name" value="Cyt_B5-like_heme/steroid-bd"/>
</dbReference>
<dbReference type="InterPro" id="IPR036400">
    <property type="entry name" value="Cyt_B5-like_heme/steroid_sf"/>
</dbReference>
<dbReference type="InterPro" id="IPR018506">
    <property type="entry name" value="Cyt_B5_heme-BS"/>
</dbReference>
<dbReference type="InterPro" id="IPR050668">
    <property type="entry name" value="Cytochrome_b5"/>
</dbReference>
<dbReference type="PANTHER" id="PTHR19359">
    <property type="entry name" value="CYTOCHROME B5"/>
    <property type="match status" value="1"/>
</dbReference>
<dbReference type="PANTHER" id="PTHR19359:SF150">
    <property type="entry name" value="CYTOCHROME B5"/>
    <property type="match status" value="1"/>
</dbReference>
<dbReference type="Pfam" id="PF00173">
    <property type="entry name" value="Cyt-b5"/>
    <property type="match status" value="1"/>
</dbReference>
<dbReference type="PRINTS" id="PR00363">
    <property type="entry name" value="CYTOCHROMEB5"/>
</dbReference>
<dbReference type="SMART" id="SM01117">
    <property type="entry name" value="Cyt-b5"/>
    <property type="match status" value="1"/>
</dbReference>
<dbReference type="SUPFAM" id="SSF55856">
    <property type="entry name" value="Cytochrome b5-like heme/steroid binding domain"/>
    <property type="match status" value="1"/>
</dbReference>
<dbReference type="PROSITE" id="PS00191">
    <property type="entry name" value="CYTOCHROME_B5_1"/>
    <property type="match status" value="1"/>
</dbReference>
<dbReference type="PROSITE" id="PS50255">
    <property type="entry name" value="CYTOCHROME_B5_2"/>
    <property type="match status" value="1"/>
</dbReference>
<organism>
    <name type="scientific">Rattus norvegicus</name>
    <name type="common">Rat</name>
    <dbReference type="NCBI Taxonomy" id="10116"/>
    <lineage>
        <taxon>Eukaryota</taxon>
        <taxon>Metazoa</taxon>
        <taxon>Chordata</taxon>
        <taxon>Craniata</taxon>
        <taxon>Vertebrata</taxon>
        <taxon>Euteleostomi</taxon>
        <taxon>Mammalia</taxon>
        <taxon>Eutheria</taxon>
        <taxon>Euarchontoglires</taxon>
        <taxon>Glires</taxon>
        <taxon>Rodentia</taxon>
        <taxon>Myomorpha</taxon>
        <taxon>Muroidea</taxon>
        <taxon>Muridae</taxon>
        <taxon>Murinae</taxon>
        <taxon>Rattus</taxon>
    </lineage>
</organism>
<name>CYB5_RAT</name>
<gene>
    <name type="primary">Cyb5a</name>
    <name type="synonym">Cyb5</name>
</gene>
<evidence type="ECO:0000250" key="1">
    <source>
        <dbReference type="UniProtKB" id="P56395"/>
    </source>
</evidence>
<evidence type="ECO:0000255" key="2"/>
<evidence type="ECO:0000255" key="3">
    <source>
        <dbReference type="PROSITE-ProRule" id="PRU00279"/>
    </source>
</evidence>
<evidence type="ECO:0000269" key="4">
    <source>
    </source>
</evidence>
<evidence type="ECO:0000269" key="5">
    <source>
    </source>
</evidence>
<evidence type="ECO:0000305" key="6"/>
<evidence type="ECO:0007829" key="7">
    <source>
        <dbReference type="PDB" id="1AQA"/>
    </source>
</evidence>
<evidence type="ECO:0007829" key="8">
    <source>
        <dbReference type="PDB" id="1AW3"/>
    </source>
</evidence>
<evidence type="ECO:0007829" key="9">
    <source>
        <dbReference type="PDB" id="1B5A"/>
    </source>
</evidence>
<evidence type="ECO:0007829" key="10">
    <source>
        <dbReference type="PDB" id="5XE4"/>
    </source>
</evidence>
<accession>P00173</accession>
<accession>O35768</accession>
<keyword id="KW-0002">3D-structure</keyword>
<keyword id="KW-0007">Acetylation</keyword>
<keyword id="KW-0025">Alternative splicing</keyword>
<keyword id="KW-0903">Direct protein sequencing</keyword>
<keyword id="KW-0249">Electron transport</keyword>
<keyword id="KW-0256">Endoplasmic reticulum</keyword>
<keyword id="KW-0349">Heme</keyword>
<keyword id="KW-0408">Iron</keyword>
<keyword id="KW-0472">Membrane</keyword>
<keyword id="KW-0479">Metal-binding</keyword>
<keyword id="KW-0492">Microsome</keyword>
<keyword id="KW-1185">Reference proteome</keyword>
<keyword id="KW-0812">Transmembrane</keyword>
<keyword id="KW-1133">Transmembrane helix</keyword>
<keyword id="KW-0813">Transport</keyword>
<feature type="initiator methionine" description="Removed" evidence="4 5">
    <location>
        <position position="1"/>
    </location>
</feature>
<feature type="chain" id="PRO_0000166014" description="Cytochrome b5">
    <location>
        <begin position="2"/>
        <end position="134"/>
    </location>
</feature>
<feature type="transmembrane region" description="Helical" evidence="2">
    <location>
        <begin position="109"/>
        <end position="131"/>
    </location>
</feature>
<feature type="domain" description="Cytochrome b5 heme-binding" evidence="3">
    <location>
        <begin position="9"/>
        <end position="85"/>
    </location>
</feature>
<feature type="binding site" description="axial binding residue">
    <location>
        <position position="44"/>
    </location>
    <ligand>
        <name>heme</name>
        <dbReference type="ChEBI" id="CHEBI:30413"/>
    </ligand>
    <ligandPart>
        <name>Fe</name>
        <dbReference type="ChEBI" id="CHEBI:18248"/>
    </ligandPart>
</feature>
<feature type="binding site" description="axial binding residue">
    <location>
        <position position="68"/>
    </location>
    <ligand>
        <name>heme</name>
        <dbReference type="ChEBI" id="CHEBI:30413"/>
    </ligand>
    <ligandPart>
        <name>Fe</name>
        <dbReference type="ChEBI" id="CHEBI:18248"/>
    </ligandPart>
</feature>
<feature type="modified residue" description="N-acetylalanine" evidence="5">
    <location>
        <position position="2"/>
    </location>
</feature>
<feature type="modified residue" description="N6-acetyllysine" evidence="1">
    <location>
        <position position="7"/>
    </location>
</feature>
<feature type="modified residue" description="N6-acetyllysine" evidence="1">
    <location>
        <position position="10"/>
    </location>
</feature>
<feature type="modified residue" description="N6-acetyllysine" evidence="1">
    <location>
        <position position="19"/>
    </location>
</feature>
<feature type="splice variant" id="VSP_001246" description="In isoform Short." evidence="6">
    <original>ETLI</original>
    <variation>HSAL</variation>
    <location>
        <begin position="97"/>
        <end position="100"/>
    </location>
</feature>
<feature type="splice variant" id="VSP_001247" description="In isoform Short." evidence="6">
    <location>
        <begin position="101"/>
        <end position="134"/>
    </location>
</feature>
<feature type="sequence conflict" description="In Ref. 6; AA sequence." evidence="6" ref="6">
    <original>Q</original>
    <variation>E</variation>
    <location>
        <position position="18"/>
    </location>
</feature>
<feature type="helix" evidence="10">
    <location>
        <begin position="5"/>
        <end position="7"/>
    </location>
</feature>
<feature type="strand" evidence="10">
    <location>
        <begin position="9"/>
        <end position="12"/>
    </location>
</feature>
<feature type="helix" evidence="7">
    <location>
        <begin position="14"/>
        <end position="19"/>
    </location>
</feature>
<feature type="strand" evidence="7">
    <location>
        <begin position="21"/>
        <end position="24"/>
    </location>
</feature>
<feature type="strand" evidence="7">
    <location>
        <begin position="27"/>
        <end position="29"/>
    </location>
</feature>
<feature type="strand" evidence="7">
    <location>
        <begin position="34"/>
        <end position="36"/>
    </location>
</feature>
<feature type="helix" evidence="7">
    <location>
        <begin position="40"/>
        <end position="42"/>
    </location>
</feature>
<feature type="helix" evidence="7">
    <location>
        <begin position="47"/>
        <end position="52"/>
    </location>
</feature>
<feature type="turn" evidence="7">
    <location>
        <begin position="53"/>
        <end position="56"/>
    </location>
</feature>
<feature type="helix" evidence="7">
    <location>
        <begin position="60"/>
        <end position="64"/>
    </location>
</feature>
<feature type="turn" evidence="9">
    <location>
        <begin position="65"/>
        <end position="67"/>
    </location>
</feature>
<feature type="helix" evidence="7">
    <location>
        <begin position="70"/>
        <end position="74"/>
    </location>
</feature>
<feature type="helix" evidence="7">
    <location>
        <begin position="76"/>
        <end position="79"/>
    </location>
</feature>
<feature type="strand" evidence="8">
    <location>
        <begin position="80"/>
        <end position="84"/>
    </location>
</feature>
<feature type="helix" evidence="7">
    <location>
        <begin position="88"/>
        <end position="90"/>
    </location>
</feature>
<feature type="turn" evidence="10">
    <location>
        <begin position="96"/>
        <end position="98"/>
    </location>
</feature>
<proteinExistence type="evidence at protein level"/>